<reference key="1">
    <citation type="journal article" date="2004" name="Genome Res.">
        <title>The status, quality, and expansion of the NIH full-length cDNA project: the Mammalian Gene Collection (MGC).</title>
        <authorList>
            <consortium name="The MGC Project Team"/>
        </authorList>
    </citation>
    <scope>NUCLEOTIDE SEQUENCE [LARGE SCALE MRNA]</scope>
    <source>
        <tissue>Pituitary</tissue>
    </source>
</reference>
<sequence>MAVSLLLRGGRIRALKAALLEAKVFRGELASTVPLSTESENNKKAAGPTSKTESVFKEPTLVPESSDTTTYKNLQHHEYNAFTFLDLNLDLSKFRLPQPSSGRESPRH</sequence>
<comment type="function">
    <text evidence="2">Accessory subunit of the mitochondrial membrane respiratory chain NADH dehydrogenase (Complex I), that is believed not to be involved in catalysis. Complex I functions in the transfer of electrons from NADH to the respiratory chain. The immediate electron acceptor for the enzyme is believed to be ubiquinone. May be the terminally assembled subunit of Complex I.</text>
</comment>
<comment type="subunit">
    <text evidence="2">Complex I is composed of 45 different subunits. This is a component of the flavoprotein-sulfur (FP) fragment of the enzyme.</text>
</comment>
<comment type="subcellular location">
    <subcellularLocation>
        <location evidence="2">Mitochondrion inner membrane</location>
        <topology evidence="2">Peripheral membrane protein</topology>
        <orientation evidence="2">Matrix side</orientation>
    </subcellularLocation>
</comment>
<comment type="similarity">
    <text evidence="4">Belongs to the complex I NDUFV3 subunit family.</text>
</comment>
<name>NDUV3_RAT</name>
<dbReference type="EMBL" id="BC059134">
    <property type="protein sequence ID" value="AAH59134.1"/>
    <property type="molecule type" value="mRNA"/>
</dbReference>
<dbReference type="RefSeq" id="NP_001094481.1">
    <property type="nucleotide sequence ID" value="NM_001101011.2"/>
</dbReference>
<dbReference type="SMR" id="Q6PCU8"/>
<dbReference type="BioGRID" id="249123">
    <property type="interactions" value="2"/>
</dbReference>
<dbReference type="FunCoup" id="Q6PCU8">
    <property type="interactions" value="768"/>
</dbReference>
<dbReference type="STRING" id="10116.ENSRNOP00000038094"/>
<dbReference type="GlyGen" id="Q6PCU8">
    <property type="glycosylation" value="1 site"/>
</dbReference>
<dbReference type="iPTMnet" id="Q6PCU8"/>
<dbReference type="PhosphoSitePlus" id="Q6PCU8"/>
<dbReference type="PaxDb" id="10116-ENSRNOP00000038094"/>
<dbReference type="Ensembl" id="ENSRNOT00000030926.2">
    <property type="protein sequence ID" value="ENSRNOP00000038094.1"/>
    <property type="gene ID" value="ENSRNOG00000027593.2"/>
</dbReference>
<dbReference type="Ensembl" id="ENSRNOT00000098355.1">
    <property type="protein sequence ID" value="ENSRNOP00000084950.1"/>
    <property type="gene ID" value="ENSRNOG00000001182.8"/>
</dbReference>
<dbReference type="GeneID" id="64539"/>
<dbReference type="KEGG" id="rno:64539"/>
<dbReference type="AGR" id="RGD:621020"/>
<dbReference type="CTD" id="4731"/>
<dbReference type="RGD" id="621020">
    <property type="gene designation" value="Ndufv3"/>
</dbReference>
<dbReference type="eggNOG" id="ENOG502S46A">
    <property type="taxonomic scope" value="Eukaryota"/>
</dbReference>
<dbReference type="GeneTree" id="ENSGT00390000012196"/>
<dbReference type="HOGENOM" id="CLU_2157565_0_0_1"/>
<dbReference type="InParanoid" id="Q6PCU8"/>
<dbReference type="OMA" id="CLQVEIW"/>
<dbReference type="OrthoDB" id="6161911at2759"/>
<dbReference type="PhylomeDB" id="Q6PCU8"/>
<dbReference type="TreeFam" id="TF314773"/>
<dbReference type="Reactome" id="R-RNO-611105">
    <property type="pathway name" value="Respiratory electron transport"/>
</dbReference>
<dbReference type="Reactome" id="R-RNO-6799198">
    <property type="pathway name" value="Complex I biogenesis"/>
</dbReference>
<dbReference type="Reactome" id="R-RNO-9837999">
    <property type="pathway name" value="Mitochondrial protein degradation"/>
</dbReference>
<dbReference type="PRO" id="PR:Q6PCU8"/>
<dbReference type="Proteomes" id="UP000002494">
    <property type="component" value="Chromosome 13"/>
</dbReference>
<dbReference type="Proteomes" id="UP000002494">
    <property type="component" value="Chromosome 20"/>
</dbReference>
<dbReference type="Bgee" id="ENSRNOG00000001182">
    <property type="expression patterns" value="Expressed in heart and 20 other cell types or tissues"/>
</dbReference>
<dbReference type="ExpressionAtlas" id="Q6PCU8">
    <property type="expression patterns" value="baseline and differential"/>
</dbReference>
<dbReference type="GO" id="GO:0005743">
    <property type="term" value="C:mitochondrial inner membrane"/>
    <property type="evidence" value="ECO:0000266"/>
    <property type="project" value="RGD"/>
</dbReference>
<dbReference type="GO" id="GO:0045271">
    <property type="term" value="C:respiratory chain complex I"/>
    <property type="evidence" value="ECO:0000250"/>
    <property type="project" value="UniProtKB"/>
</dbReference>
<dbReference type="GO" id="GO:0042775">
    <property type="term" value="P:mitochondrial ATP synthesis coupled electron transport"/>
    <property type="evidence" value="ECO:0000266"/>
    <property type="project" value="RGD"/>
</dbReference>
<dbReference type="InterPro" id="IPR026193">
    <property type="entry name" value="NDUFV3"/>
</dbReference>
<dbReference type="PANTHER" id="PTHR17117:SF1">
    <property type="entry name" value="NADH DEHYDROGENASE [UBIQUINONE] FLAVOPROTEIN 3, MITOCHONDRIAL"/>
    <property type="match status" value="1"/>
</dbReference>
<dbReference type="PANTHER" id="PTHR17117">
    <property type="entry name" value="NADH-UBIQUINONE OXIDOREDUCTASE"/>
    <property type="match status" value="1"/>
</dbReference>
<dbReference type="Pfam" id="PF15880">
    <property type="entry name" value="NDUFV3"/>
    <property type="match status" value="1"/>
</dbReference>
<accession>Q6PCU8</accession>
<proteinExistence type="inferred from homology"/>
<keyword id="KW-0249">Electron transport</keyword>
<keyword id="KW-0472">Membrane</keyword>
<keyword id="KW-0496">Mitochondrion</keyword>
<keyword id="KW-0999">Mitochondrion inner membrane</keyword>
<keyword id="KW-0597">Phosphoprotein</keyword>
<keyword id="KW-1185">Reference proteome</keyword>
<keyword id="KW-0679">Respiratory chain</keyword>
<keyword id="KW-0809">Transit peptide</keyword>
<keyword id="KW-0813">Transport</keyword>
<protein>
    <recommendedName>
        <fullName>NADH dehydrogenase [ubiquinone] flavoprotein 3, mitochondrial</fullName>
    </recommendedName>
    <alternativeName>
        <fullName>Complex I-9kD</fullName>
        <shortName>CI-9kD</shortName>
    </alternativeName>
    <alternativeName>
        <fullName>NADH-ubiquinone oxidoreductase 9 kDa subunit</fullName>
    </alternativeName>
</protein>
<evidence type="ECO:0000250" key="1"/>
<evidence type="ECO:0000250" key="2">
    <source>
        <dbReference type="UniProtKB" id="P56181"/>
    </source>
</evidence>
<evidence type="ECO:0000256" key="3">
    <source>
        <dbReference type="SAM" id="MobiDB-lite"/>
    </source>
</evidence>
<evidence type="ECO:0000305" key="4"/>
<gene>
    <name type="primary">Ndufv3</name>
</gene>
<feature type="transit peptide" description="Mitochondrion" evidence="1">
    <location>
        <begin position="1"/>
        <end position="35"/>
    </location>
</feature>
<feature type="chain" id="PRO_0000251886" description="NADH dehydrogenase [ubiquinone] flavoprotein 3, mitochondrial">
    <location>
        <begin position="36"/>
        <end position="108"/>
    </location>
</feature>
<feature type="region of interest" description="Disordered" evidence="3">
    <location>
        <begin position="32"/>
        <end position="67"/>
    </location>
</feature>
<feature type="modified residue" description="Phosphoserine" evidence="2">
    <location>
        <position position="105"/>
    </location>
</feature>
<organism>
    <name type="scientific">Rattus norvegicus</name>
    <name type="common">Rat</name>
    <dbReference type="NCBI Taxonomy" id="10116"/>
    <lineage>
        <taxon>Eukaryota</taxon>
        <taxon>Metazoa</taxon>
        <taxon>Chordata</taxon>
        <taxon>Craniata</taxon>
        <taxon>Vertebrata</taxon>
        <taxon>Euteleostomi</taxon>
        <taxon>Mammalia</taxon>
        <taxon>Eutheria</taxon>
        <taxon>Euarchontoglires</taxon>
        <taxon>Glires</taxon>
        <taxon>Rodentia</taxon>
        <taxon>Myomorpha</taxon>
        <taxon>Muroidea</taxon>
        <taxon>Muridae</taxon>
        <taxon>Murinae</taxon>
        <taxon>Rattus</taxon>
    </lineage>
</organism>